<protein>
    <recommendedName>
        <fullName evidence="1">Protoheme IX farnesyltransferase 1</fullName>
        <ecNumber evidence="1">2.5.1.141</ecNumber>
    </recommendedName>
    <alternativeName>
        <fullName evidence="1">Heme B farnesyltransferase 1</fullName>
    </alternativeName>
    <alternativeName>
        <fullName evidence="1">Heme O synthase 1</fullName>
    </alternativeName>
</protein>
<name>CYOE1_SHELP</name>
<keyword id="KW-0997">Cell inner membrane</keyword>
<keyword id="KW-1003">Cell membrane</keyword>
<keyword id="KW-0350">Heme biosynthesis</keyword>
<keyword id="KW-0472">Membrane</keyword>
<keyword id="KW-1185">Reference proteome</keyword>
<keyword id="KW-0808">Transferase</keyword>
<keyword id="KW-0812">Transmembrane</keyword>
<keyword id="KW-1133">Transmembrane helix</keyword>
<comment type="function">
    <text evidence="1">Converts heme B (protoheme IX) to heme O by substitution of the vinyl group on carbon 2 of heme B porphyrin ring with a hydroxyethyl farnesyl side group.</text>
</comment>
<comment type="catalytic activity">
    <reaction evidence="1">
        <text>heme b + (2E,6E)-farnesyl diphosphate + H2O = Fe(II)-heme o + diphosphate</text>
        <dbReference type="Rhea" id="RHEA:28070"/>
        <dbReference type="ChEBI" id="CHEBI:15377"/>
        <dbReference type="ChEBI" id="CHEBI:33019"/>
        <dbReference type="ChEBI" id="CHEBI:60344"/>
        <dbReference type="ChEBI" id="CHEBI:60530"/>
        <dbReference type="ChEBI" id="CHEBI:175763"/>
        <dbReference type="EC" id="2.5.1.141"/>
    </reaction>
</comment>
<comment type="pathway">
    <text evidence="1">Porphyrin-containing compound metabolism; heme O biosynthesis; heme O from protoheme: step 1/1.</text>
</comment>
<comment type="subcellular location">
    <subcellularLocation>
        <location evidence="1">Cell inner membrane</location>
        <topology evidence="1">Multi-pass membrane protein</topology>
    </subcellularLocation>
</comment>
<comment type="miscellaneous">
    <text evidence="1">Carbon 2 of the heme B porphyrin ring is defined according to the Fischer nomenclature.</text>
</comment>
<comment type="similarity">
    <text evidence="1">Belongs to the UbiA prenyltransferase family. Protoheme IX farnesyltransferase subfamily.</text>
</comment>
<reference key="1">
    <citation type="submission" date="2007-03" db="EMBL/GenBank/DDBJ databases">
        <title>Complete sequence of Shewanella loihica PV-4.</title>
        <authorList>
            <consortium name="US DOE Joint Genome Institute"/>
            <person name="Copeland A."/>
            <person name="Lucas S."/>
            <person name="Lapidus A."/>
            <person name="Barry K."/>
            <person name="Detter J.C."/>
            <person name="Glavina del Rio T."/>
            <person name="Hammon N."/>
            <person name="Israni S."/>
            <person name="Dalin E."/>
            <person name="Tice H."/>
            <person name="Pitluck S."/>
            <person name="Chain P."/>
            <person name="Malfatti S."/>
            <person name="Shin M."/>
            <person name="Vergez L."/>
            <person name="Schmutz J."/>
            <person name="Larimer F."/>
            <person name="Land M."/>
            <person name="Hauser L."/>
            <person name="Kyrpides N."/>
            <person name="Mikhailova N."/>
            <person name="Romine M.F."/>
            <person name="Serres G."/>
            <person name="Fredrickson J."/>
            <person name="Tiedje J."/>
            <person name="Richardson P."/>
        </authorList>
    </citation>
    <scope>NUCLEOTIDE SEQUENCE [LARGE SCALE GENOMIC DNA]</scope>
    <source>
        <strain>ATCC BAA-1088 / PV-4</strain>
    </source>
</reference>
<evidence type="ECO:0000255" key="1">
    <source>
        <dbReference type="HAMAP-Rule" id="MF_00154"/>
    </source>
</evidence>
<proteinExistence type="inferred from homology"/>
<organism>
    <name type="scientific">Shewanella loihica (strain ATCC BAA-1088 / PV-4)</name>
    <dbReference type="NCBI Taxonomy" id="323850"/>
    <lineage>
        <taxon>Bacteria</taxon>
        <taxon>Pseudomonadati</taxon>
        <taxon>Pseudomonadota</taxon>
        <taxon>Gammaproteobacteria</taxon>
        <taxon>Alteromonadales</taxon>
        <taxon>Shewanellaceae</taxon>
        <taxon>Shewanella</taxon>
    </lineage>
</organism>
<dbReference type="EC" id="2.5.1.141" evidence="1"/>
<dbReference type="EMBL" id="CP000606">
    <property type="protein sequence ID" value="ABO21989.1"/>
    <property type="molecule type" value="Genomic_DNA"/>
</dbReference>
<dbReference type="RefSeq" id="WP_011863926.1">
    <property type="nucleotide sequence ID" value="NC_009092.1"/>
</dbReference>
<dbReference type="SMR" id="A3Q941"/>
<dbReference type="STRING" id="323850.Shew_0117"/>
<dbReference type="KEGG" id="slo:Shew_0117"/>
<dbReference type="eggNOG" id="COG0109">
    <property type="taxonomic scope" value="Bacteria"/>
</dbReference>
<dbReference type="HOGENOM" id="CLU_029631_0_2_6"/>
<dbReference type="OrthoDB" id="9814417at2"/>
<dbReference type="UniPathway" id="UPA00834">
    <property type="reaction ID" value="UER00712"/>
</dbReference>
<dbReference type="Proteomes" id="UP000001558">
    <property type="component" value="Chromosome"/>
</dbReference>
<dbReference type="GO" id="GO:0005886">
    <property type="term" value="C:plasma membrane"/>
    <property type="evidence" value="ECO:0007669"/>
    <property type="project" value="UniProtKB-SubCell"/>
</dbReference>
<dbReference type="GO" id="GO:0008495">
    <property type="term" value="F:protoheme IX farnesyltransferase activity"/>
    <property type="evidence" value="ECO:0007669"/>
    <property type="project" value="UniProtKB-UniRule"/>
</dbReference>
<dbReference type="GO" id="GO:0048034">
    <property type="term" value="P:heme O biosynthetic process"/>
    <property type="evidence" value="ECO:0007669"/>
    <property type="project" value="UniProtKB-UniRule"/>
</dbReference>
<dbReference type="CDD" id="cd13957">
    <property type="entry name" value="PT_UbiA_Cox10"/>
    <property type="match status" value="1"/>
</dbReference>
<dbReference type="FunFam" id="1.10.357.140:FF:000001">
    <property type="entry name" value="Protoheme IX farnesyltransferase"/>
    <property type="match status" value="1"/>
</dbReference>
<dbReference type="Gene3D" id="1.10.357.140">
    <property type="entry name" value="UbiA prenyltransferase"/>
    <property type="match status" value="1"/>
</dbReference>
<dbReference type="HAMAP" id="MF_00154">
    <property type="entry name" value="CyoE_CtaB"/>
    <property type="match status" value="1"/>
</dbReference>
<dbReference type="InterPro" id="IPR006369">
    <property type="entry name" value="Protohaem_IX_farnesylTrfase"/>
</dbReference>
<dbReference type="InterPro" id="IPR000537">
    <property type="entry name" value="UbiA_prenyltransferase"/>
</dbReference>
<dbReference type="InterPro" id="IPR030470">
    <property type="entry name" value="UbiA_prenylTrfase_CS"/>
</dbReference>
<dbReference type="InterPro" id="IPR044878">
    <property type="entry name" value="UbiA_sf"/>
</dbReference>
<dbReference type="NCBIfam" id="TIGR01473">
    <property type="entry name" value="cyoE_ctaB"/>
    <property type="match status" value="1"/>
</dbReference>
<dbReference type="NCBIfam" id="NF003349">
    <property type="entry name" value="PRK04375.1-2"/>
    <property type="match status" value="1"/>
</dbReference>
<dbReference type="PANTHER" id="PTHR43448:SF7">
    <property type="entry name" value="4-HYDROXYBENZOATE SOLANESYLTRANSFERASE"/>
    <property type="match status" value="1"/>
</dbReference>
<dbReference type="PANTHER" id="PTHR43448">
    <property type="entry name" value="PROTOHEME IX FARNESYLTRANSFERASE, MITOCHONDRIAL"/>
    <property type="match status" value="1"/>
</dbReference>
<dbReference type="Pfam" id="PF01040">
    <property type="entry name" value="UbiA"/>
    <property type="match status" value="1"/>
</dbReference>
<dbReference type="PROSITE" id="PS00943">
    <property type="entry name" value="UBIA"/>
    <property type="match status" value="1"/>
</dbReference>
<accession>A3Q941</accession>
<sequence length="300" mass="33031">MAKPMTITKPVATPLPWRAYLEMTKPRVVALMLLTVLVGMCLAVPGAVPVQPLIAGLVGIGMMAGAAAAYNHLIDRRIDGLMARTYNRPLPKGRISITKALTFATAMAILGFALLYWAVNPLTAWLTFASLIGYAVIYTAYLKRATPQNIVVGGLAGAMPPLLGWTAITGEFHGHALLLVIIIFAWTPPHFWALAIHRRAEYAKVDVPMLPVTHGVEFTKTCIMLYTVLLALACLYPVLVGMCGPLYLVGSTLLSCGFIYKAWQLKYRDKPGLAMQVFRFSIYHLMLLFLLLLVDHYLWS</sequence>
<feature type="chain" id="PRO_0000326947" description="Protoheme IX farnesyltransferase 1">
    <location>
        <begin position="1"/>
        <end position="300"/>
    </location>
</feature>
<feature type="transmembrane region" description="Helical" evidence="1">
    <location>
        <begin position="28"/>
        <end position="48"/>
    </location>
</feature>
<feature type="transmembrane region" description="Helical" evidence="1">
    <location>
        <begin position="50"/>
        <end position="70"/>
    </location>
</feature>
<feature type="transmembrane region" description="Helical" evidence="1">
    <location>
        <begin position="106"/>
        <end position="126"/>
    </location>
</feature>
<feature type="transmembrane region" description="Helical" evidence="1">
    <location>
        <begin position="150"/>
        <end position="170"/>
    </location>
</feature>
<feature type="transmembrane region" description="Helical" evidence="1">
    <location>
        <begin position="176"/>
        <end position="196"/>
    </location>
</feature>
<feature type="transmembrane region" description="Helical" evidence="1">
    <location>
        <begin position="222"/>
        <end position="242"/>
    </location>
</feature>
<feature type="transmembrane region" description="Helical" evidence="1">
    <location>
        <begin position="243"/>
        <end position="263"/>
    </location>
</feature>
<feature type="transmembrane region" description="Helical" evidence="1">
    <location>
        <begin position="280"/>
        <end position="300"/>
    </location>
</feature>
<gene>
    <name evidence="1" type="primary">cyoE1</name>
    <name type="ordered locus">Shew_0117</name>
</gene>